<sequence length="308" mass="34539">MQKVVAIVGPTAVGKTSLAIEIAKKLDGEIVSGDSMQIYKEVAIGTAKASREEQAEVKHYLVDAHSVFEDFSVKNFVDEARSAIGEIAGKGKLPIIAGGTGFYVNALLNDMQLGDKEEEAASVDPEWEVFLAANGPQALWEELNKKDPEAAKKIPVANSRRSLRALSVISRTGGLFSKQQAEIKPRYDYLIIGLNSDREAIYQRINQRVDLMMEAGLLEEARFVYEHRAGEHQVLQAIGYKEFFPYFAGEASLETCVMALKTASRRYAKRQLTYFRNKLPVEWYDPLTDPNCANRIAVRIEEWMKEEK</sequence>
<protein>
    <recommendedName>
        <fullName evidence="1">tRNA dimethylallyltransferase</fullName>
        <ecNumber evidence="1">2.5.1.75</ecNumber>
    </recommendedName>
    <alternativeName>
        <fullName evidence="1">Dimethylallyl diphosphate:tRNA dimethylallyltransferase</fullName>
        <shortName evidence="1">DMAPP:tRNA dimethylallyltransferase</shortName>
        <shortName evidence="1">DMATase</shortName>
    </alternativeName>
    <alternativeName>
        <fullName evidence="1">Isopentenyl-diphosphate:tRNA isopentenyltransferase</fullName>
        <shortName evidence="1">IPP transferase</shortName>
        <shortName evidence="1">IPPT</shortName>
        <shortName evidence="1">IPTase</shortName>
    </alternativeName>
</protein>
<proteinExistence type="inferred from homology"/>
<gene>
    <name evidence="1" type="primary">miaA</name>
    <name type="ordered locus">LBUL_1371</name>
</gene>
<organism>
    <name type="scientific">Lactobacillus delbrueckii subsp. bulgaricus (strain ATCC BAA-365 / Lb-18)</name>
    <dbReference type="NCBI Taxonomy" id="321956"/>
    <lineage>
        <taxon>Bacteria</taxon>
        <taxon>Bacillati</taxon>
        <taxon>Bacillota</taxon>
        <taxon>Bacilli</taxon>
        <taxon>Lactobacillales</taxon>
        <taxon>Lactobacillaceae</taxon>
        <taxon>Lactobacillus</taxon>
    </lineage>
</organism>
<reference key="1">
    <citation type="journal article" date="2006" name="Proc. Natl. Acad. Sci. U.S.A.">
        <title>Comparative genomics of the lactic acid bacteria.</title>
        <authorList>
            <person name="Makarova K.S."/>
            <person name="Slesarev A."/>
            <person name="Wolf Y.I."/>
            <person name="Sorokin A."/>
            <person name="Mirkin B."/>
            <person name="Koonin E.V."/>
            <person name="Pavlov A."/>
            <person name="Pavlova N."/>
            <person name="Karamychev V."/>
            <person name="Polouchine N."/>
            <person name="Shakhova V."/>
            <person name="Grigoriev I."/>
            <person name="Lou Y."/>
            <person name="Rohksar D."/>
            <person name="Lucas S."/>
            <person name="Huang K."/>
            <person name="Goodstein D.M."/>
            <person name="Hawkins T."/>
            <person name="Plengvidhya V."/>
            <person name="Welker D."/>
            <person name="Hughes J."/>
            <person name="Goh Y."/>
            <person name="Benson A."/>
            <person name="Baldwin K."/>
            <person name="Lee J.-H."/>
            <person name="Diaz-Muniz I."/>
            <person name="Dosti B."/>
            <person name="Smeianov V."/>
            <person name="Wechter W."/>
            <person name="Barabote R."/>
            <person name="Lorca G."/>
            <person name="Altermann E."/>
            <person name="Barrangou R."/>
            <person name="Ganesan B."/>
            <person name="Xie Y."/>
            <person name="Rawsthorne H."/>
            <person name="Tamir D."/>
            <person name="Parker C."/>
            <person name="Breidt F."/>
            <person name="Broadbent J.R."/>
            <person name="Hutkins R."/>
            <person name="O'Sullivan D."/>
            <person name="Steele J."/>
            <person name="Unlu G."/>
            <person name="Saier M.H. Jr."/>
            <person name="Klaenhammer T."/>
            <person name="Richardson P."/>
            <person name="Kozyavkin S."/>
            <person name="Weimer B.C."/>
            <person name="Mills D.A."/>
        </authorList>
    </citation>
    <scope>NUCLEOTIDE SEQUENCE [LARGE SCALE GENOMIC DNA]</scope>
    <source>
        <strain>ATCC BAA-365 / Lb-18</strain>
    </source>
</reference>
<accession>Q049I6</accession>
<feature type="chain" id="PRO_1000020613" description="tRNA dimethylallyltransferase">
    <location>
        <begin position="1"/>
        <end position="308"/>
    </location>
</feature>
<feature type="region of interest" description="Interaction with substrate tRNA" evidence="1">
    <location>
        <begin position="34"/>
        <end position="37"/>
    </location>
</feature>
<feature type="binding site" evidence="1">
    <location>
        <begin position="9"/>
        <end position="16"/>
    </location>
    <ligand>
        <name>ATP</name>
        <dbReference type="ChEBI" id="CHEBI:30616"/>
    </ligand>
</feature>
<feature type="binding site" evidence="1">
    <location>
        <begin position="11"/>
        <end position="16"/>
    </location>
    <ligand>
        <name>substrate</name>
    </ligand>
</feature>
<feature type="site" description="Interaction with substrate tRNA" evidence="1">
    <location>
        <position position="100"/>
    </location>
</feature>
<name>MIAA_LACDB</name>
<keyword id="KW-0067">ATP-binding</keyword>
<keyword id="KW-0460">Magnesium</keyword>
<keyword id="KW-0547">Nucleotide-binding</keyword>
<keyword id="KW-0808">Transferase</keyword>
<keyword id="KW-0819">tRNA processing</keyword>
<evidence type="ECO:0000255" key="1">
    <source>
        <dbReference type="HAMAP-Rule" id="MF_00185"/>
    </source>
</evidence>
<dbReference type="EC" id="2.5.1.75" evidence="1"/>
<dbReference type="EMBL" id="CP000412">
    <property type="protein sequence ID" value="ABJ58886.1"/>
    <property type="molecule type" value="Genomic_DNA"/>
</dbReference>
<dbReference type="RefSeq" id="WP_003620155.1">
    <property type="nucleotide sequence ID" value="NC_008529.1"/>
</dbReference>
<dbReference type="SMR" id="Q049I6"/>
<dbReference type="KEGG" id="lbu:LBUL_1371"/>
<dbReference type="HOGENOM" id="CLU_032616_0_1_9"/>
<dbReference type="BioCyc" id="LDEL321956:LBUL_RS06450-MONOMER"/>
<dbReference type="GO" id="GO:0005524">
    <property type="term" value="F:ATP binding"/>
    <property type="evidence" value="ECO:0007669"/>
    <property type="project" value="UniProtKB-UniRule"/>
</dbReference>
<dbReference type="GO" id="GO:0052381">
    <property type="term" value="F:tRNA dimethylallyltransferase activity"/>
    <property type="evidence" value="ECO:0007669"/>
    <property type="project" value="UniProtKB-UniRule"/>
</dbReference>
<dbReference type="GO" id="GO:0006400">
    <property type="term" value="P:tRNA modification"/>
    <property type="evidence" value="ECO:0007669"/>
    <property type="project" value="TreeGrafter"/>
</dbReference>
<dbReference type="Gene3D" id="1.10.20.140">
    <property type="match status" value="1"/>
</dbReference>
<dbReference type="Gene3D" id="3.40.50.300">
    <property type="entry name" value="P-loop containing nucleotide triphosphate hydrolases"/>
    <property type="match status" value="1"/>
</dbReference>
<dbReference type="HAMAP" id="MF_00185">
    <property type="entry name" value="IPP_trans"/>
    <property type="match status" value="1"/>
</dbReference>
<dbReference type="InterPro" id="IPR039657">
    <property type="entry name" value="Dimethylallyltransferase"/>
</dbReference>
<dbReference type="InterPro" id="IPR018022">
    <property type="entry name" value="IPT"/>
</dbReference>
<dbReference type="InterPro" id="IPR027417">
    <property type="entry name" value="P-loop_NTPase"/>
</dbReference>
<dbReference type="NCBIfam" id="TIGR00174">
    <property type="entry name" value="miaA"/>
    <property type="match status" value="1"/>
</dbReference>
<dbReference type="PANTHER" id="PTHR11088">
    <property type="entry name" value="TRNA DIMETHYLALLYLTRANSFERASE"/>
    <property type="match status" value="1"/>
</dbReference>
<dbReference type="PANTHER" id="PTHR11088:SF60">
    <property type="entry name" value="TRNA DIMETHYLALLYLTRANSFERASE"/>
    <property type="match status" value="1"/>
</dbReference>
<dbReference type="Pfam" id="PF01715">
    <property type="entry name" value="IPPT"/>
    <property type="match status" value="1"/>
</dbReference>
<dbReference type="SUPFAM" id="SSF52540">
    <property type="entry name" value="P-loop containing nucleoside triphosphate hydrolases"/>
    <property type="match status" value="2"/>
</dbReference>
<comment type="function">
    <text evidence="1">Catalyzes the transfer of a dimethylallyl group onto the adenine at position 37 in tRNAs that read codons beginning with uridine, leading to the formation of N6-(dimethylallyl)adenosine (i(6)A).</text>
</comment>
<comment type="catalytic activity">
    <reaction evidence="1">
        <text>adenosine(37) in tRNA + dimethylallyl diphosphate = N(6)-dimethylallyladenosine(37) in tRNA + diphosphate</text>
        <dbReference type="Rhea" id="RHEA:26482"/>
        <dbReference type="Rhea" id="RHEA-COMP:10162"/>
        <dbReference type="Rhea" id="RHEA-COMP:10375"/>
        <dbReference type="ChEBI" id="CHEBI:33019"/>
        <dbReference type="ChEBI" id="CHEBI:57623"/>
        <dbReference type="ChEBI" id="CHEBI:74411"/>
        <dbReference type="ChEBI" id="CHEBI:74415"/>
        <dbReference type="EC" id="2.5.1.75"/>
    </reaction>
</comment>
<comment type="cofactor">
    <cofactor evidence="1">
        <name>Mg(2+)</name>
        <dbReference type="ChEBI" id="CHEBI:18420"/>
    </cofactor>
</comment>
<comment type="subunit">
    <text evidence="1">Monomer.</text>
</comment>
<comment type="similarity">
    <text evidence="1">Belongs to the IPP transferase family.</text>
</comment>